<name>TOP1_RICPR</name>
<feature type="chain" id="PRO_0000145163" description="DNA topoisomerase 1">
    <location>
        <begin position="1"/>
        <end position="776"/>
    </location>
</feature>
<feature type="domain" description="Toprim" evidence="1">
    <location>
        <begin position="1"/>
        <end position="111"/>
    </location>
</feature>
<feature type="domain" description="Topo IA-type catalytic" evidence="2">
    <location>
        <begin position="132"/>
        <end position="568"/>
    </location>
</feature>
<feature type="zinc finger region" description="C4-type">
    <location>
        <begin position="600"/>
        <end position="627"/>
    </location>
</feature>
<feature type="region of interest" description="Interaction with DNA" evidence="1">
    <location>
        <begin position="166"/>
        <end position="171"/>
    </location>
</feature>
<feature type="active site" description="O-(5'-phospho-DNA)-tyrosine intermediate" evidence="2">
    <location>
        <position position="304"/>
    </location>
</feature>
<feature type="binding site" evidence="1">
    <location>
        <position position="7"/>
    </location>
    <ligand>
        <name>Mg(2+)</name>
        <dbReference type="ChEBI" id="CHEBI:18420"/>
        <note>catalytic</note>
    </ligand>
</feature>
<feature type="binding site" evidence="1">
    <location>
        <position position="80"/>
    </location>
    <ligand>
        <name>Mg(2+)</name>
        <dbReference type="ChEBI" id="CHEBI:18420"/>
        <note>catalytic</note>
    </ligand>
</feature>
<feature type="site" description="Interaction with DNA" evidence="1">
    <location>
        <position position="31"/>
    </location>
</feature>
<feature type="site" description="Interaction with DNA" evidence="1">
    <location>
        <position position="142"/>
    </location>
</feature>
<feature type="site" description="Interaction with DNA" evidence="1">
    <location>
        <position position="143"/>
    </location>
</feature>
<feature type="site" description="Interaction with DNA" evidence="1">
    <location>
        <position position="146"/>
    </location>
</feature>
<feature type="site" description="Interaction with DNA" evidence="1">
    <location>
        <position position="158"/>
    </location>
</feature>
<feature type="site" description="Interaction with DNA" evidence="1">
    <location>
        <position position="306"/>
    </location>
</feature>
<feature type="site" description="Interaction with DNA" evidence="1">
    <location>
        <position position="499"/>
    </location>
</feature>
<sequence length="776" mass="88722">MKLVIVESPAKAKTINKYLGDEFKVIASFGHIRDLPSKKGSVLPDKNFLMEYDISDKAGKYVDAIVKEARKAEVVYLATDPDREGESISWHVAEVIKEKNKVESDDFFKRVAFNEITKKAIMNAVANPRKLDTNLVNAQQARRALDYLVGFTLSPLLWRKLPGCKSAGRVQSVALRLICDREDEIERFKSEEYWDISLKMQNSNNDLFTAKLTHVNDQKLKKFSIINEKEAKDLTQKLKLQKFYVEKIEKKQQKRQPQPPFITSSLQQEAARKLGFSAKKTMQIAQKLYEGVDIGKETIGLITYMRTDGVTLSNDAIADIRKLIDKNYGNQYLPIKPRIYQSKVKNAQEAHEAIRPTNITYTPDSLKQKLEKDYYKLYELIWHRTIACQMENVIMDLVIANLASENKEYLAKANGSIIAFDGFYKVYRESLDDEDEEDNKMLPPLKEQEHIKTKEVIPNKHFTEPPPRYSEASLVKKLEELGIGRPSTYASILSVLQDRKYVALEKKRFIPEELGRLVTVFLVGFFKKYVEYDFTAGLENELDEIAAGKLEWKTALNNFWRGFNHNIESVNEQKITEIINYLQKALDYHLFGEDKESKVCPSCKTGQLSLKLGKFGAFLACSNYPECTFKKSIVSGNDNNEDEGDPSTILNDNKILGTDQDGVEIYLKKGPYGPYIQLGEQCGKVKPKRTPVPANLKQSEITLEIALKLLNLPLKIGIHKDSGEEIIIGYSKFGPYIKYMCKFISVPKKYDFLNLSLNDAMKLIQNNKAKLEKKYG</sequence>
<accession>Q9ZDK2</accession>
<evidence type="ECO:0000255" key="1">
    <source>
        <dbReference type="HAMAP-Rule" id="MF_00952"/>
    </source>
</evidence>
<evidence type="ECO:0000255" key="2">
    <source>
        <dbReference type="PROSITE-ProRule" id="PRU01383"/>
    </source>
</evidence>
<comment type="function">
    <text evidence="1">Releases the supercoiling and torsional tension of DNA, which is introduced during the DNA replication and transcription, by transiently cleaving and rejoining one strand of the DNA duplex. Introduces a single-strand break via transesterification at a target site in duplex DNA. The scissile phosphodiester is attacked by the catalytic tyrosine of the enzyme, resulting in the formation of a DNA-(5'-phosphotyrosyl)-enzyme intermediate and the expulsion of a 3'-OH DNA strand. The free DNA strand then undergoes passage around the unbroken strand, thus removing DNA supercoils. Finally, in the religation step, the DNA 3'-OH attacks the covalent intermediate to expel the active-site tyrosine and restore the DNA phosphodiester backbone.</text>
</comment>
<comment type="catalytic activity">
    <reaction evidence="1">
        <text>ATP-independent breakage of single-stranded DNA, followed by passage and rejoining.</text>
        <dbReference type="EC" id="5.6.2.1"/>
    </reaction>
</comment>
<comment type="cofactor">
    <cofactor evidence="1">
        <name>Mg(2+)</name>
        <dbReference type="ChEBI" id="CHEBI:18420"/>
    </cofactor>
</comment>
<comment type="subunit">
    <text evidence="1">Monomer.</text>
</comment>
<comment type="similarity">
    <text evidence="1">Belongs to the type IA topoisomerase family.</text>
</comment>
<reference key="1">
    <citation type="journal article" date="1998" name="Nature">
        <title>The genome sequence of Rickettsia prowazekii and the origin of mitochondria.</title>
        <authorList>
            <person name="Andersson S.G.E."/>
            <person name="Zomorodipour A."/>
            <person name="Andersson J.O."/>
            <person name="Sicheritz-Ponten T."/>
            <person name="Alsmark U.C.M."/>
            <person name="Podowski R.M."/>
            <person name="Naeslund A.K."/>
            <person name="Eriksson A.-S."/>
            <person name="Winkler H.H."/>
            <person name="Kurland C.G."/>
        </authorList>
    </citation>
    <scope>NUCLEOTIDE SEQUENCE [LARGE SCALE GENOMIC DNA]</scope>
    <source>
        <strain>Madrid E</strain>
    </source>
</reference>
<gene>
    <name evidence="1" type="primary">topA</name>
    <name type="ordered locus">RP326</name>
</gene>
<proteinExistence type="inferred from homology"/>
<keyword id="KW-0238">DNA-binding</keyword>
<keyword id="KW-0413">Isomerase</keyword>
<keyword id="KW-0460">Magnesium</keyword>
<keyword id="KW-0479">Metal-binding</keyword>
<keyword id="KW-1185">Reference proteome</keyword>
<keyword id="KW-0799">Topoisomerase</keyword>
<keyword id="KW-0862">Zinc</keyword>
<keyword id="KW-0863">Zinc-finger</keyword>
<dbReference type="EC" id="5.6.2.1" evidence="1"/>
<dbReference type="EMBL" id="AJ235271">
    <property type="protein sequence ID" value="CAA14786.1"/>
    <property type="molecule type" value="Genomic_DNA"/>
</dbReference>
<dbReference type="PIR" id="H71688">
    <property type="entry name" value="H71688"/>
</dbReference>
<dbReference type="RefSeq" id="NP_220709.1">
    <property type="nucleotide sequence ID" value="NC_000963.1"/>
</dbReference>
<dbReference type="RefSeq" id="WP_004599409.1">
    <property type="nucleotide sequence ID" value="NC_000963.1"/>
</dbReference>
<dbReference type="SMR" id="Q9ZDK2"/>
<dbReference type="STRING" id="272947.gene:17555406"/>
<dbReference type="EnsemblBacteria" id="CAA14786">
    <property type="protein sequence ID" value="CAA14786"/>
    <property type="gene ID" value="CAA14786"/>
</dbReference>
<dbReference type="GeneID" id="57569452"/>
<dbReference type="KEGG" id="rpr:RP326"/>
<dbReference type="PATRIC" id="fig|272947.5.peg.336"/>
<dbReference type="eggNOG" id="COG0550">
    <property type="taxonomic scope" value="Bacteria"/>
</dbReference>
<dbReference type="eggNOG" id="COG1754">
    <property type="taxonomic scope" value="Bacteria"/>
</dbReference>
<dbReference type="HOGENOM" id="CLU_002929_4_3_5"/>
<dbReference type="OrthoDB" id="9804262at2"/>
<dbReference type="Proteomes" id="UP000002480">
    <property type="component" value="Chromosome"/>
</dbReference>
<dbReference type="GO" id="GO:0005694">
    <property type="term" value="C:chromosome"/>
    <property type="evidence" value="ECO:0007669"/>
    <property type="project" value="InterPro"/>
</dbReference>
<dbReference type="GO" id="GO:0003677">
    <property type="term" value="F:DNA binding"/>
    <property type="evidence" value="ECO:0007669"/>
    <property type="project" value="UniProtKB-KW"/>
</dbReference>
<dbReference type="GO" id="GO:0003917">
    <property type="term" value="F:DNA topoisomerase type I (single strand cut, ATP-independent) activity"/>
    <property type="evidence" value="ECO:0007669"/>
    <property type="project" value="UniProtKB-UniRule"/>
</dbReference>
<dbReference type="GO" id="GO:0008270">
    <property type="term" value="F:zinc ion binding"/>
    <property type="evidence" value="ECO:0007669"/>
    <property type="project" value="UniProtKB-KW"/>
</dbReference>
<dbReference type="GO" id="GO:0006265">
    <property type="term" value="P:DNA topological change"/>
    <property type="evidence" value="ECO:0007669"/>
    <property type="project" value="UniProtKB-UniRule"/>
</dbReference>
<dbReference type="CDD" id="cd00186">
    <property type="entry name" value="TOP1Ac"/>
    <property type="match status" value="1"/>
</dbReference>
<dbReference type="CDD" id="cd03363">
    <property type="entry name" value="TOPRIM_TopoIA_TopoI"/>
    <property type="match status" value="1"/>
</dbReference>
<dbReference type="Gene3D" id="3.40.50.140">
    <property type="match status" value="1"/>
</dbReference>
<dbReference type="Gene3D" id="3.30.65.10">
    <property type="entry name" value="Bacterial Topoisomerase I, domain 1"/>
    <property type="match status" value="1"/>
</dbReference>
<dbReference type="Gene3D" id="1.10.460.10">
    <property type="entry name" value="Topoisomerase I, domain 2"/>
    <property type="match status" value="1"/>
</dbReference>
<dbReference type="Gene3D" id="2.70.20.10">
    <property type="entry name" value="Topoisomerase I, domain 3"/>
    <property type="match status" value="1"/>
</dbReference>
<dbReference type="Gene3D" id="1.10.290.10">
    <property type="entry name" value="Topoisomerase I, domain 4"/>
    <property type="match status" value="1"/>
</dbReference>
<dbReference type="HAMAP" id="MF_00952">
    <property type="entry name" value="Topoisom_1_prok"/>
    <property type="match status" value="1"/>
</dbReference>
<dbReference type="InterPro" id="IPR000380">
    <property type="entry name" value="Topo_IA"/>
</dbReference>
<dbReference type="InterPro" id="IPR003601">
    <property type="entry name" value="Topo_IA_2"/>
</dbReference>
<dbReference type="InterPro" id="IPR023406">
    <property type="entry name" value="Topo_IA_AS"/>
</dbReference>
<dbReference type="InterPro" id="IPR013497">
    <property type="entry name" value="Topo_IA_cen"/>
</dbReference>
<dbReference type="InterPro" id="IPR013824">
    <property type="entry name" value="Topo_IA_cen_sub1"/>
</dbReference>
<dbReference type="InterPro" id="IPR013825">
    <property type="entry name" value="Topo_IA_cen_sub2"/>
</dbReference>
<dbReference type="InterPro" id="IPR013826">
    <property type="entry name" value="Topo_IA_cen_sub3"/>
</dbReference>
<dbReference type="InterPro" id="IPR023405">
    <property type="entry name" value="Topo_IA_core_domain"/>
</dbReference>
<dbReference type="InterPro" id="IPR003602">
    <property type="entry name" value="Topo_IA_DNA-bd_dom"/>
</dbReference>
<dbReference type="InterPro" id="IPR013498">
    <property type="entry name" value="Topo_IA_Znf"/>
</dbReference>
<dbReference type="InterPro" id="IPR005733">
    <property type="entry name" value="TopoI_bac-type"/>
</dbReference>
<dbReference type="InterPro" id="IPR028612">
    <property type="entry name" value="Topoisom_1_IA"/>
</dbReference>
<dbReference type="InterPro" id="IPR025589">
    <property type="entry name" value="Toprim_C_rpt"/>
</dbReference>
<dbReference type="InterPro" id="IPR006171">
    <property type="entry name" value="TOPRIM_dom"/>
</dbReference>
<dbReference type="InterPro" id="IPR034149">
    <property type="entry name" value="TOPRIM_TopoI"/>
</dbReference>
<dbReference type="NCBIfam" id="TIGR01051">
    <property type="entry name" value="topA_bact"/>
    <property type="match status" value="1"/>
</dbReference>
<dbReference type="PANTHER" id="PTHR42785:SF1">
    <property type="entry name" value="DNA TOPOISOMERASE"/>
    <property type="match status" value="1"/>
</dbReference>
<dbReference type="PANTHER" id="PTHR42785">
    <property type="entry name" value="DNA TOPOISOMERASE, TYPE IA, CORE"/>
    <property type="match status" value="1"/>
</dbReference>
<dbReference type="Pfam" id="PF01131">
    <property type="entry name" value="Topoisom_bac"/>
    <property type="match status" value="1"/>
</dbReference>
<dbReference type="Pfam" id="PF01751">
    <property type="entry name" value="Toprim"/>
    <property type="match status" value="1"/>
</dbReference>
<dbReference type="Pfam" id="PF13368">
    <property type="entry name" value="Toprim_C_rpt"/>
    <property type="match status" value="2"/>
</dbReference>
<dbReference type="Pfam" id="PF01396">
    <property type="entry name" value="Zn_ribbon_Top1"/>
    <property type="match status" value="1"/>
</dbReference>
<dbReference type="PRINTS" id="PR00417">
    <property type="entry name" value="PRTPISMRASEI"/>
</dbReference>
<dbReference type="SMART" id="SM00437">
    <property type="entry name" value="TOP1Ac"/>
    <property type="match status" value="1"/>
</dbReference>
<dbReference type="SMART" id="SM00436">
    <property type="entry name" value="TOP1Bc"/>
    <property type="match status" value="1"/>
</dbReference>
<dbReference type="SMART" id="SM00493">
    <property type="entry name" value="TOPRIM"/>
    <property type="match status" value="1"/>
</dbReference>
<dbReference type="SUPFAM" id="SSF56712">
    <property type="entry name" value="Prokaryotic type I DNA topoisomerase"/>
    <property type="match status" value="1"/>
</dbReference>
<dbReference type="SUPFAM" id="SSF57783">
    <property type="entry name" value="Zinc beta-ribbon"/>
    <property type="match status" value="1"/>
</dbReference>
<dbReference type="PROSITE" id="PS00396">
    <property type="entry name" value="TOPO_IA_1"/>
    <property type="match status" value="1"/>
</dbReference>
<dbReference type="PROSITE" id="PS52039">
    <property type="entry name" value="TOPO_IA_2"/>
    <property type="match status" value="1"/>
</dbReference>
<dbReference type="PROSITE" id="PS50880">
    <property type="entry name" value="TOPRIM"/>
    <property type="match status" value="1"/>
</dbReference>
<organism>
    <name type="scientific">Rickettsia prowazekii (strain Madrid E)</name>
    <dbReference type="NCBI Taxonomy" id="272947"/>
    <lineage>
        <taxon>Bacteria</taxon>
        <taxon>Pseudomonadati</taxon>
        <taxon>Pseudomonadota</taxon>
        <taxon>Alphaproteobacteria</taxon>
        <taxon>Rickettsiales</taxon>
        <taxon>Rickettsiaceae</taxon>
        <taxon>Rickettsieae</taxon>
        <taxon>Rickettsia</taxon>
        <taxon>typhus group</taxon>
    </lineage>
</organism>
<protein>
    <recommendedName>
        <fullName evidence="1">DNA topoisomerase 1</fullName>
        <ecNumber evidence="1">5.6.2.1</ecNumber>
    </recommendedName>
    <alternativeName>
        <fullName evidence="1">DNA topoisomerase I</fullName>
    </alternativeName>
    <alternativeName>
        <fullName>Omega-protein</fullName>
    </alternativeName>
    <alternativeName>
        <fullName>Relaxing enzyme</fullName>
    </alternativeName>
    <alternativeName>
        <fullName>Swivelase</fullName>
    </alternativeName>
    <alternativeName>
        <fullName>Untwisting enzyme</fullName>
    </alternativeName>
</protein>